<feature type="chain" id="PRO_1000077657" description="GTPase Der">
    <location>
        <begin position="1"/>
        <end position="490"/>
    </location>
</feature>
<feature type="domain" description="EngA-type G 1">
    <location>
        <begin position="3"/>
        <end position="167"/>
    </location>
</feature>
<feature type="domain" description="EngA-type G 2">
    <location>
        <begin position="203"/>
        <end position="378"/>
    </location>
</feature>
<feature type="domain" description="KH-like" evidence="1">
    <location>
        <begin position="379"/>
        <end position="465"/>
    </location>
</feature>
<feature type="region of interest" description="Disordered" evidence="2">
    <location>
        <begin position="451"/>
        <end position="490"/>
    </location>
</feature>
<feature type="compositionally biased region" description="Basic residues" evidence="2">
    <location>
        <begin position="469"/>
        <end position="484"/>
    </location>
</feature>
<feature type="binding site" evidence="1">
    <location>
        <begin position="9"/>
        <end position="16"/>
    </location>
    <ligand>
        <name>GTP</name>
        <dbReference type="ChEBI" id="CHEBI:37565"/>
        <label>1</label>
    </ligand>
</feature>
<feature type="binding site" evidence="1">
    <location>
        <begin position="56"/>
        <end position="60"/>
    </location>
    <ligand>
        <name>GTP</name>
        <dbReference type="ChEBI" id="CHEBI:37565"/>
        <label>1</label>
    </ligand>
</feature>
<feature type="binding site" evidence="1">
    <location>
        <begin position="119"/>
        <end position="122"/>
    </location>
    <ligand>
        <name>GTP</name>
        <dbReference type="ChEBI" id="CHEBI:37565"/>
        <label>1</label>
    </ligand>
</feature>
<feature type="binding site" evidence="1">
    <location>
        <begin position="209"/>
        <end position="216"/>
    </location>
    <ligand>
        <name>GTP</name>
        <dbReference type="ChEBI" id="CHEBI:37565"/>
        <label>2</label>
    </ligand>
</feature>
<feature type="binding site" evidence="1">
    <location>
        <begin position="256"/>
        <end position="260"/>
    </location>
    <ligand>
        <name>GTP</name>
        <dbReference type="ChEBI" id="CHEBI:37565"/>
        <label>2</label>
    </ligand>
</feature>
<feature type="binding site" evidence="1">
    <location>
        <begin position="321"/>
        <end position="324"/>
    </location>
    <ligand>
        <name>GTP</name>
        <dbReference type="ChEBI" id="CHEBI:37565"/>
        <label>2</label>
    </ligand>
</feature>
<protein>
    <recommendedName>
        <fullName evidence="1">GTPase Der</fullName>
    </recommendedName>
    <alternativeName>
        <fullName evidence="1">GTP-binding protein EngA</fullName>
    </alternativeName>
</protein>
<gene>
    <name evidence="1" type="primary">der</name>
    <name type="synonym">engA</name>
    <name type="ordered locus">Dshi_1166</name>
</gene>
<keyword id="KW-0342">GTP-binding</keyword>
<keyword id="KW-0547">Nucleotide-binding</keyword>
<keyword id="KW-1185">Reference proteome</keyword>
<keyword id="KW-0677">Repeat</keyword>
<keyword id="KW-0690">Ribosome biogenesis</keyword>
<evidence type="ECO:0000255" key="1">
    <source>
        <dbReference type="HAMAP-Rule" id="MF_00195"/>
    </source>
</evidence>
<evidence type="ECO:0000256" key="2">
    <source>
        <dbReference type="SAM" id="MobiDB-lite"/>
    </source>
</evidence>
<organism>
    <name type="scientific">Dinoroseobacter shibae (strain DSM 16493 / NCIMB 14021 / DFL 12)</name>
    <dbReference type="NCBI Taxonomy" id="398580"/>
    <lineage>
        <taxon>Bacteria</taxon>
        <taxon>Pseudomonadati</taxon>
        <taxon>Pseudomonadota</taxon>
        <taxon>Alphaproteobacteria</taxon>
        <taxon>Rhodobacterales</taxon>
        <taxon>Roseobacteraceae</taxon>
        <taxon>Dinoroseobacter</taxon>
    </lineage>
</organism>
<reference key="1">
    <citation type="journal article" date="2010" name="ISME J.">
        <title>The complete genome sequence of the algal symbiont Dinoroseobacter shibae: a hitchhiker's guide to life in the sea.</title>
        <authorList>
            <person name="Wagner-Dobler I."/>
            <person name="Ballhausen B."/>
            <person name="Berger M."/>
            <person name="Brinkhoff T."/>
            <person name="Buchholz I."/>
            <person name="Bunk B."/>
            <person name="Cypionka H."/>
            <person name="Daniel R."/>
            <person name="Drepper T."/>
            <person name="Gerdts G."/>
            <person name="Hahnke S."/>
            <person name="Han C."/>
            <person name="Jahn D."/>
            <person name="Kalhoefer D."/>
            <person name="Kiss H."/>
            <person name="Klenk H.P."/>
            <person name="Kyrpides N."/>
            <person name="Liebl W."/>
            <person name="Liesegang H."/>
            <person name="Meincke L."/>
            <person name="Pati A."/>
            <person name="Petersen J."/>
            <person name="Piekarski T."/>
            <person name="Pommerenke C."/>
            <person name="Pradella S."/>
            <person name="Pukall R."/>
            <person name="Rabus R."/>
            <person name="Stackebrandt E."/>
            <person name="Thole S."/>
            <person name="Thompson L."/>
            <person name="Tielen P."/>
            <person name="Tomasch J."/>
            <person name="von Jan M."/>
            <person name="Wanphrut N."/>
            <person name="Wichels A."/>
            <person name="Zech H."/>
            <person name="Simon M."/>
        </authorList>
    </citation>
    <scope>NUCLEOTIDE SEQUENCE [LARGE SCALE GENOMIC DNA]</scope>
    <source>
        <strain>DSM 16493 / NCIMB 14021 / DFL 12</strain>
    </source>
</reference>
<proteinExistence type="inferred from homology"/>
<comment type="function">
    <text evidence="1">GTPase that plays an essential role in the late steps of ribosome biogenesis.</text>
</comment>
<comment type="subunit">
    <text evidence="1">Associates with the 50S ribosomal subunit.</text>
</comment>
<comment type="similarity">
    <text evidence="1">Belongs to the TRAFAC class TrmE-Era-EngA-EngB-Septin-like GTPase superfamily. EngA (Der) GTPase family.</text>
</comment>
<dbReference type="EMBL" id="CP000830">
    <property type="protein sequence ID" value="ABV92908.1"/>
    <property type="molecule type" value="Genomic_DNA"/>
</dbReference>
<dbReference type="RefSeq" id="WP_012177838.1">
    <property type="nucleotide sequence ID" value="NC_009952.1"/>
</dbReference>
<dbReference type="SMR" id="A8LHW1"/>
<dbReference type="STRING" id="398580.Dshi_1166"/>
<dbReference type="KEGG" id="dsh:Dshi_1166"/>
<dbReference type="eggNOG" id="COG1160">
    <property type="taxonomic scope" value="Bacteria"/>
</dbReference>
<dbReference type="HOGENOM" id="CLU_016077_5_0_5"/>
<dbReference type="OrthoDB" id="9805918at2"/>
<dbReference type="Proteomes" id="UP000006833">
    <property type="component" value="Chromosome"/>
</dbReference>
<dbReference type="GO" id="GO:0005525">
    <property type="term" value="F:GTP binding"/>
    <property type="evidence" value="ECO:0007669"/>
    <property type="project" value="UniProtKB-UniRule"/>
</dbReference>
<dbReference type="GO" id="GO:0042254">
    <property type="term" value="P:ribosome biogenesis"/>
    <property type="evidence" value="ECO:0007669"/>
    <property type="project" value="UniProtKB-KW"/>
</dbReference>
<dbReference type="CDD" id="cd01894">
    <property type="entry name" value="EngA1"/>
    <property type="match status" value="1"/>
</dbReference>
<dbReference type="CDD" id="cd01895">
    <property type="entry name" value="EngA2"/>
    <property type="match status" value="1"/>
</dbReference>
<dbReference type="FunFam" id="3.30.300.20:FF:000004">
    <property type="entry name" value="GTPase Der"/>
    <property type="match status" value="1"/>
</dbReference>
<dbReference type="Gene3D" id="3.30.300.20">
    <property type="match status" value="1"/>
</dbReference>
<dbReference type="Gene3D" id="3.40.50.300">
    <property type="entry name" value="P-loop containing nucleotide triphosphate hydrolases"/>
    <property type="match status" value="2"/>
</dbReference>
<dbReference type="HAMAP" id="MF_00195">
    <property type="entry name" value="GTPase_Der"/>
    <property type="match status" value="1"/>
</dbReference>
<dbReference type="InterPro" id="IPR031166">
    <property type="entry name" value="G_ENGA"/>
</dbReference>
<dbReference type="InterPro" id="IPR006073">
    <property type="entry name" value="GTP-bd"/>
</dbReference>
<dbReference type="InterPro" id="IPR016484">
    <property type="entry name" value="GTPase_Der"/>
</dbReference>
<dbReference type="InterPro" id="IPR032859">
    <property type="entry name" value="KH_dom-like"/>
</dbReference>
<dbReference type="InterPro" id="IPR015946">
    <property type="entry name" value="KH_dom-like_a/b"/>
</dbReference>
<dbReference type="InterPro" id="IPR027417">
    <property type="entry name" value="P-loop_NTPase"/>
</dbReference>
<dbReference type="InterPro" id="IPR005225">
    <property type="entry name" value="Small_GTP-bd"/>
</dbReference>
<dbReference type="NCBIfam" id="TIGR03594">
    <property type="entry name" value="GTPase_EngA"/>
    <property type="match status" value="1"/>
</dbReference>
<dbReference type="NCBIfam" id="TIGR00231">
    <property type="entry name" value="small_GTP"/>
    <property type="match status" value="2"/>
</dbReference>
<dbReference type="PANTHER" id="PTHR43834">
    <property type="entry name" value="GTPASE DER"/>
    <property type="match status" value="1"/>
</dbReference>
<dbReference type="PANTHER" id="PTHR43834:SF6">
    <property type="entry name" value="GTPASE DER"/>
    <property type="match status" value="1"/>
</dbReference>
<dbReference type="Pfam" id="PF14714">
    <property type="entry name" value="KH_dom-like"/>
    <property type="match status" value="1"/>
</dbReference>
<dbReference type="Pfam" id="PF01926">
    <property type="entry name" value="MMR_HSR1"/>
    <property type="match status" value="2"/>
</dbReference>
<dbReference type="PIRSF" id="PIRSF006485">
    <property type="entry name" value="GTP-binding_EngA"/>
    <property type="match status" value="1"/>
</dbReference>
<dbReference type="PRINTS" id="PR00326">
    <property type="entry name" value="GTP1OBG"/>
</dbReference>
<dbReference type="SUPFAM" id="SSF52540">
    <property type="entry name" value="P-loop containing nucleoside triphosphate hydrolases"/>
    <property type="match status" value="2"/>
</dbReference>
<dbReference type="PROSITE" id="PS51712">
    <property type="entry name" value="G_ENGA"/>
    <property type="match status" value="2"/>
</dbReference>
<sequence length="490" mass="53710">MPFTLAIVGRPNVGKSTLFNRLVGKRLALVDDQPGVTRDLREGAARLGDLRFTVIDTAGLEEATDDSLQGRMRRLTERAVSMADACLFLIDARVGVTPTDEVFADILRRSNAHVLLGANKAEGRAAEAGLIEAYALGLGEPLALSAEHGEGMAELTGALMPLIDAFEETENAETEDAPETDVALDPDAEEETVVRVPTKAKPLQVAVVGRPNAGKSTLINQLLGEDRLLTGPEAGITRDAISLAMDWDGLPVRIFDTAGMRKKAKVQEKLEKLSVSDGLRAVKFAEVVVVLLDAGIPFEQQDLRIADLAEREGRAVVIAVNKWDMEDDKQGKLKELKEAFERLLPQLRGAPLVTVSAKTGRGMDRLRDAVLRAHEVWNRRVPTAALNRWLGAMVEAHPPPAPGGRRIKLRYMTQAKTRPPGFVVMCSYPEKIPESYTRYLVNGLREDFDMPGTPIRLTMRSQSDANPYKNRKKSTPSRLRKHLGKPSLKG</sequence>
<accession>A8LHW1</accession>
<name>DER_DINSH</name>